<organismHost>
    <name type="scientific">Homo sapiens</name>
    <name type="common">Human</name>
    <dbReference type="NCBI Taxonomy" id="9606"/>
</organismHost>
<accession>P12494</accession>
<keyword id="KW-0014">AIDS</keyword>
<keyword id="KW-0167">Capsid protein</keyword>
<keyword id="KW-1032">Host cell membrane</keyword>
<keyword id="KW-1035">Host cytoplasm</keyword>
<keyword id="KW-1039">Host endosome</keyword>
<keyword id="KW-1043">Host membrane</keyword>
<keyword id="KW-1048">Host nucleus</keyword>
<keyword id="KW-0945">Host-virus interaction</keyword>
<keyword id="KW-0449">Lipoprotein</keyword>
<keyword id="KW-0472">Membrane</keyword>
<keyword id="KW-0479">Metal-binding</keyword>
<keyword id="KW-0488">Methylation</keyword>
<keyword id="KW-0519">Myristate</keyword>
<keyword id="KW-0597">Phosphoprotein</keyword>
<keyword id="KW-0677">Repeat</keyword>
<keyword id="KW-0688">Ribosomal frameshifting</keyword>
<keyword id="KW-0694">RNA-binding</keyword>
<keyword id="KW-1198">Viral budding</keyword>
<keyword id="KW-1187">Viral budding via the host ESCRT complexes</keyword>
<keyword id="KW-0543">Viral nucleoprotein</keyword>
<keyword id="KW-1188">Viral release from host cell</keyword>
<keyword id="KW-0946">Virion</keyword>
<keyword id="KW-0862">Zinc</keyword>
<keyword id="KW-0863">Zinc-finger</keyword>
<reference key="1">
    <citation type="journal article" date="1989" name="AIDS Res. Hum. Retroviruses">
        <title>Nucleotide sequences of gag and env genes of a Japanese isolate of HIV-1 and their expression in bacteria.</title>
        <authorList>
            <person name="Komiyama N."/>
            <person name="Hattori N."/>
            <person name="Inoue J."/>
            <person name="Sakuma S."/>
            <person name="Kurimura T."/>
            <person name="Yoshida M."/>
        </authorList>
    </citation>
    <scope>NUCLEOTIDE SEQUENCE [GENOMIC RNA]</scope>
</reference>
<reference key="2">
    <citation type="journal article" date="2003" name="Biochim. Biophys. Acta">
        <title>Role of HIV-1 Gag domains in viral assembly.</title>
        <authorList>
            <person name="Scarlata S."/>
            <person name="Carter C."/>
        </authorList>
    </citation>
    <scope>REVIEW</scope>
</reference>
<feature type="initiator methionine" description="Removed; by host" evidence="1">
    <location>
        <position position="1"/>
    </location>
</feature>
<feature type="chain" id="PRO_0000261217" description="Gag polyprotein">
    <location>
        <begin position="2"/>
        <end position="500"/>
    </location>
</feature>
<feature type="chain" id="PRO_0000038535" description="Matrix protein p17" evidence="1">
    <location>
        <begin position="2"/>
        <end position="132"/>
    </location>
</feature>
<feature type="chain" id="PRO_0000038536" description="Capsid protein p24" evidence="1">
    <location>
        <begin position="133"/>
        <end position="363"/>
    </location>
</feature>
<feature type="peptide" id="PRO_0000038537" description="Spacer peptide 1" evidence="1">
    <location>
        <begin position="364"/>
        <end position="377"/>
    </location>
</feature>
<feature type="chain" id="PRO_0000038538" description="Nucleocapsid protein p7" evidence="1">
    <location>
        <begin position="378"/>
        <end position="432"/>
    </location>
</feature>
<feature type="peptide" id="PRO_0000038539" description="Spacer peptide 2" evidence="1">
    <location>
        <begin position="433"/>
        <end position="448"/>
    </location>
</feature>
<feature type="chain" id="PRO_0000038540" description="p6-gag" evidence="1">
    <location>
        <begin position="449"/>
        <end position="500"/>
    </location>
</feature>
<feature type="zinc finger region" description="CCHC-type 1" evidence="8">
    <location>
        <begin position="390"/>
        <end position="407"/>
    </location>
</feature>
<feature type="zinc finger region" description="CCHC-type 2" evidence="8">
    <location>
        <begin position="411"/>
        <end position="428"/>
    </location>
</feature>
<feature type="region of interest" description="Interaction with Gp41" evidence="6">
    <location>
        <begin position="7"/>
        <end position="31"/>
    </location>
</feature>
<feature type="region of interest" description="Interaction with host CALM1" evidence="5">
    <location>
        <begin position="8"/>
        <end position="43"/>
    </location>
</feature>
<feature type="region of interest" description="Interaction with host AP3D1" evidence="7">
    <location>
        <begin position="12"/>
        <end position="19"/>
    </location>
</feature>
<feature type="region of interest" description="Interaction with membrane phosphatidylinositol 4,5-bisphosphate and RNA" evidence="6">
    <location>
        <begin position="14"/>
        <end position="33"/>
    </location>
</feature>
<feature type="region of interest" description="Interaction with membrane phosphatidylinositol 4,5-bisphosphate" evidence="6">
    <location>
        <begin position="73"/>
        <end position="77"/>
    </location>
</feature>
<feature type="region of interest" description="Disordered" evidence="9">
    <location>
        <begin position="106"/>
        <end position="127"/>
    </location>
</feature>
<feature type="region of interest" description="Interaction with host PPIA/CYPA and NUP153" evidence="6">
    <location>
        <begin position="189"/>
        <end position="227"/>
    </location>
</feature>
<feature type="region of interest" description="PPIA/CYPA-binding loop" evidence="5">
    <location>
        <begin position="217"/>
        <end position="225"/>
    </location>
</feature>
<feature type="region of interest" description="Dimerization/Multimerization of capsid protein p24" evidence="5">
    <location>
        <begin position="277"/>
        <end position="363"/>
    </location>
</feature>
<feature type="region of interest" description="Disordered" evidence="9">
    <location>
        <begin position="437"/>
        <end position="500"/>
    </location>
</feature>
<feature type="short sequence motif" description="Nuclear export signal" evidence="1">
    <location>
        <begin position="16"/>
        <end position="22"/>
    </location>
</feature>
<feature type="short sequence motif" description="Nuclear localization signal" evidence="1">
    <location>
        <begin position="26"/>
        <end position="32"/>
    </location>
</feature>
<feature type="short sequence motif" description="PTAP/PSAP motif">
    <location>
        <begin position="455"/>
        <end position="458"/>
    </location>
</feature>
<feature type="short sequence motif" description="LYPX(n)L motif">
    <location>
        <begin position="483"/>
        <end position="492"/>
    </location>
</feature>
<feature type="site" description="Cleavage; by viral protease" evidence="1">
    <location>
        <begin position="132"/>
        <end position="133"/>
    </location>
</feature>
<feature type="site" description="Cleavage; by viral protease" evidence="1">
    <location>
        <begin position="363"/>
        <end position="364"/>
    </location>
</feature>
<feature type="site" description="Cleavage; by viral protease" evidence="1">
    <location>
        <begin position="377"/>
        <end position="378"/>
    </location>
</feature>
<feature type="site" description="Cleavage; by viral protease" evidence="1">
    <location>
        <begin position="432"/>
        <end position="433"/>
    </location>
</feature>
<feature type="site" description="Cleavage; by viral protease" evidence="1">
    <location>
        <begin position="448"/>
        <end position="449"/>
    </location>
</feature>
<feature type="modified residue" description="Phosphoserine; by host MAPK1" evidence="6">
    <location>
        <position position="148"/>
    </location>
</feature>
<feature type="modified residue" description="Asymmetric dimethylarginine; in Nucleocapsid protein p7; by host PRMT6" evidence="1">
    <location>
        <position position="387"/>
    </location>
</feature>
<feature type="modified residue" description="Asymmetric dimethylarginine; in Nucleocapsid protein p7; by host PRMT6" evidence="1">
    <location>
        <position position="409"/>
    </location>
</feature>
<feature type="lipid moiety-binding region" description="N-myristoyl glycine; by host" evidence="1">
    <location>
        <position position="2"/>
    </location>
</feature>
<sequence>MGARASVLSGGELDRWEKIRLRPGGKKKYKLKHIVWASRELERFAVNPSLLETSEGCRQILGQLQPSLQTGSEELKSLFNTVATLYCVHQRIEVKDTKEALEKIEEEQNKSKKKAQQAAADTGNSSKVSQNYPIVQNIQGQMVHQAISPRTLNAWVKVVEEKAFSPEVIPMFSALSEGATPQDLNTMLNTVGGHQAAMQMLKETINEEAAEWDRLHPAQAGPIAPGQMREPRGSDIAGTTSTLQEQIGWMTSNPPIPVGEIYKRWIILGLNKIVRMYSPSSILDIRQGPKEPFRDYVDRFYKTLRAEQASQEVKNWMTETLLVQNANPDCKTILKALGPAATLEEMMTACQGVGGPGHKARVLAEAMSQVTNSTTIMMQRGNFRNQRKIIKCFNCGKEGHLARNCRAPRKKGCWKCGKEGHQMKDCNERQANFLGKIWPSSKGRPGNFLQSRPEPTAPPEESFRFGEETTTPSQKQEPRDKELYPLASLRSLFGNDPSSP</sequence>
<gene>
    <name type="primary">gag</name>
</gene>
<organism>
    <name type="scientific">Human immunodeficiency virus type 1 group M subtype B (isolate JH32)</name>
    <name type="common">HIV-1</name>
    <dbReference type="NCBI Taxonomy" id="11694"/>
    <lineage>
        <taxon>Viruses</taxon>
        <taxon>Riboviria</taxon>
        <taxon>Pararnavirae</taxon>
        <taxon>Artverviricota</taxon>
        <taxon>Revtraviricetes</taxon>
        <taxon>Ortervirales</taxon>
        <taxon>Retroviridae</taxon>
        <taxon>Orthoretrovirinae</taxon>
        <taxon>Lentivirus</taxon>
        <taxon>Human immunodeficiency virus type 1</taxon>
    </lineage>
</organism>
<comment type="function">
    <molecule>Gag polyprotein</molecule>
    <text evidence="5">Mediates, with Gag-Pol polyprotein, the essential events in virion assembly, including binding the plasma membrane, making the protein-protein interactions necessary to create spherical particles, recruiting the viral Env proteins, and packaging the genomic RNA via direct interactions with the RNA packaging sequence (Psi).</text>
</comment>
<comment type="function">
    <molecule>Matrix protein p17</molecule>
    <text evidence="1 6">Targets the polyprotein to the plasma membrane via a multipartite membrane-binding signal, that includes its myristoylated N-terminus (By similarity). Matrix protein is part of the pre-integration complex. Implicated in the release from host cell mediated by Vpu. Binds to RNA (By similarity).</text>
</comment>
<comment type="function">
    <molecule>Capsid protein p24</molecule>
    <text evidence="5 6">Forms the conical core that encapsulates the genomic RNA-nucleocapsid complex in the virion. Most core are conical, with only 7% tubular. The core is constituted by capsid protein hexamer subunits. The core is disassembled soon after virion entry (By similarity). The capsid promotes immune invasion by cloaking viral DNA from CGAS detection (By similarity). Host restriction factors such as TRIM5-alpha or TRIMCyp bind retroviral capsids and cause premature capsid disassembly, leading to blocks in reverse transcription. Capsid restriction by TRIM5 is one of the factors which restricts HIV-1 to the human species. Host PIN1 apparently facilitates the virion uncoating (By similarity). On the other hand, interactions with PDZD8 or CYPA stabilize the capsid (By similarity).</text>
</comment>
<comment type="function">
    <molecule>Nucleocapsid protein p7</molecule>
    <text evidence="5">Encapsulates and protects viral dimeric unspliced genomic RNA (gRNA). Binds these RNAs through its zinc fingers. Acts as a nucleic acid chaperone which is involved in rearangement of nucleic acid secondary structure during gRNA retrotranscription. Also facilitates template switch leading to recombination. As part of the polyprotein, participates in gRNA dimerization, packaging, tRNA incorporation and virion assembly.</text>
</comment>
<comment type="function">
    <molecule>p6-gag</molecule>
    <text evidence="6">Plays a role in budding of the assembled particle by interacting with the host class E VPS proteins TSG101 and PDCD6IP/AIP1.</text>
</comment>
<comment type="subunit">
    <molecule>Gag polyprotein</molecule>
    <text evidence="4 5">Homotrimer; further assembles as hexamers of trimers. Oligomerization possibly creates a central hole into which the cytoplasmic tail of the gp41 envelope protein may be inserted. Interacts with host TRIM22; this interaction seems to disrupt proper trafficking of Gag polyprotein and may interfere with budding. Interacts with host PDZD8. When ubiquitinated, interacts (via p6-gag domain) with host PACSIN2; this interaction allows PACSIN2 recruitment to viral assembly sites and its subsequent incorporation into virions. Interacts with MOV10 (By similarity).</text>
</comment>
<comment type="subunit">
    <molecule>Matrix protein p17</molecule>
    <text evidence="5 6">Homotrimer; further assembles as hexamers of trimers. Interacts with gp41 (via C-terminus). Interacts with host CALM1; this interaction induces a conformational change in the Matrix protein, triggering exposure of the myristate group. Interacts with host AP3D1; this interaction allows the polyprotein trafficking to multivesicular bodies during virus assembly. Part of the pre-integration complex (PIC) which is composed of viral genome, matrix protein, Vpr and integrase.</text>
</comment>
<comment type="subunit">
    <molecule>Capsid protein p24</molecule>
    <text evidence="5 6">Homodimer; the homodimer further multimerizes as homohexamers or homopentamers (By similarity). Interacts with host NUP98 (By similarity). Interacts with host PPIA/CYPA; this interaction stabilizes the capsid (By similarity). Interacts with host NUP153 (By similarity). Interacts with host PDZD8; this interaction stabilizes the capsid. Interacts with host TRIM5; this interaction destabilizes the capsid (By similarity). Interacts with host CPSF6 (By similarity). Interacts with host NONO; the interaction is weak (By similarity).</text>
</comment>
<comment type="subunit">
    <molecule>Nucleocapsid protein p7</molecule>
    <text evidence="6">Interacts with host NUP98.</text>
</comment>
<comment type="subunit">
    <molecule>p6-gag</molecule>
    <text evidence="3 6">Interacts with Vpr; this interaction allows Vpr incorporation into the virion. Interacts with host TSG101. p6-gag interacts with host PDCD6IP/AIP1.</text>
</comment>
<comment type="subcellular location">
    <molecule>Gag polyprotein</molecule>
    <subcellularLocation>
        <location evidence="6">Host cell membrane</location>
        <topology evidence="6">Lipid-anchor</topology>
    </subcellularLocation>
    <subcellularLocation>
        <location evidence="6">Host endosome</location>
        <location evidence="6">Host multivesicular body</location>
    </subcellularLocation>
    <text evidence="6">These locations are probably linked to virus assembly sites. The main location is the cell membrane, but under some circumstances, late endosomal compartments can serve as productive sites for virion assembly.</text>
</comment>
<comment type="subcellular location">
    <molecule>Matrix protein p17</molecule>
    <subcellularLocation>
        <location evidence="6">Virion membrane</location>
        <topology evidence="6">Lipid-anchor</topology>
    </subcellularLocation>
    <subcellularLocation>
        <location evidence="1">Host nucleus</location>
    </subcellularLocation>
    <subcellularLocation>
        <location evidence="1">Host cytoplasm</location>
    </subcellularLocation>
</comment>
<comment type="subcellular location">
    <molecule>Capsid protein p24</molecule>
    <subcellularLocation>
        <location evidence="6">Virion</location>
    </subcellularLocation>
</comment>
<comment type="subcellular location">
    <molecule>Nucleocapsid protein p7</molecule>
    <subcellularLocation>
        <location evidence="6">Virion</location>
    </subcellularLocation>
</comment>
<comment type="alternative products">
    <event type="ribosomal frameshifting"/>
    <isoform>
        <id>P12494-1</id>
        <name>Gag polyprotein</name>
        <sequence type="displayed"/>
    </isoform>
    <isoform>
        <id>P12498-1</id>
        <name>Gag-Pol polyprotein</name>
        <sequence type="external"/>
    </isoform>
    <text>Translation results in the formation of the Gag polyprotein most of the time. Ribosomal frameshifting at the gag-pol genes boundary occurs at low frequency and produces the Gag-Pol polyprotein. This strategy of translation probably allows the virus to modulate the quantity of each viral protein. Maintenance of a correct Gag to Gag-Pol ratio is essential for RNA dimerization and viral infectivity.</text>
</comment>
<comment type="domain">
    <text evidence="6">Late-budding domains (L domains) are short sequence motifs essential for viral particle budding. They recruit proteins of the host ESCRT machinery (Endosomal Sorting Complex Required for Transport) or ESCRT-associated proteins. p6-gag contains two L domains: a PTAP/PSAP motif, which interacts with the UEV domain of TSG101 and a LYPX(n)L motif which interacts with PDCD6IP/AIP1.</text>
</comment>
<comment type="PTM">
    <text evidence="6">Gag-Pol polyprotein: Specific enzymatic cleavages by the viral protease yield mature proteins.</text>
</comment>
<comment type="PTM">
    <molecule>Matrix protein p17</molecule>
    <text evidence="5">Tyrosine phosphorylated presumably in the virion by a host kinase. Phosphorylation is apparently not a major regulator of membrane association.</text>
</comment>
<comment type="PTM">
    <text evidence="6">Capsid protein p24 is phosphorylated possibly by host MAPK1; this phosphorylation is necessary for Pin1-mediated virion uncoating.</text>
</comment>
<comment type="PTM">
    <text evidence="2">Nucleocapsid protein p7 is methylated by host PRMT6, impairing its function by reducing RNA annealing and the initiation of reverse transcription.</text>
</comment>
<comment type="miscellaneous">
    <text>HIV-1 lineages are divided in three main groups, M (for Major), O (for Outlier), and N (for New, or Non-M, Non-O). The vast majority of strains found worldwide belong to the group M. Group O seems to be endemic to and largely confined to Cameroon and neighboring countries in West Central Africa, where these viruses represent a small minority of HIV-1 strains. The group N is represented by a limited number of isolates from Cameroonian persons. The group M is further subdivided in 9 clades or subtypes (A to D, F to H, J and K).</text>
</comment>
<comment type="miscellaneous">
    <molecule>Isoform Gag polyprotein</molecule>
    <text>Produced by conventional translation.</text>
</comment>
<comment type="similarity">
    <text evidence="10">Belongs to the primate lentivirus group gag polyprotein family.</text>
</comment>
<name>GAG_HV1J3</name>
<protein>
    <recommendedName>
        <fullName>Gag polyprotein</fullName>
    </recommendedName>
    <alternativeName>
        <fullName>Pr55Gag</fullName>
    </alternativeName>
    <component>
        <recommendedName>
            <fullName>Matrix protein p17</fullName>
            <shortName>MA</shortName>
        </recommendedName>
    </component>
    <component>
        <recommendedName>
            <fullName>Capsid protein p24</fullName>
            <shortName>CA</shortName>
        </recommendedName>
    </component>
    <component>
        <recommendedName>
            <fullName evidence="6">Spacer peptide 1</fullName>
            <shortName>SP1</shortName>
        </recommendedName>
        <alternativeName>
            <fullName>p2</fullName>
        </alternativeName>
    </component>
    <component>
        <recommendedName>
            <fullName>Nucleocapsid protein p7</fullName>
            <shortName>NC</shortName>
        </recommendedName>
    </component>
    <component>
        <recommendedName>
            <fullName evidence="6">Spacer peptide 2</fullName>
            <shortName>SP2</shortName>
        </recommendedName>
        <alternativeName>
            <fullName>p1</fullName>
        </alternativeName>
    </component>
    <component>
        <recommendedName>
            <fullName>p6-gag</fullName>
        </recommendedName>
    </component>
</protein>
<evidence type="ECO:0000250" key="1"/>
<evidence type="ECO:0000250" key="2">
    <source>
        <dbReference type="UniProtKB" id="P03347"/>
    </source>
</evidence>
<evidence type="ECO:0000250" key="3">
    <source>
        <dbReference type="UniProtKB" id="P03348"/>
    </source>
</evidence>
<evidence type="ECO:0000250" key="4">
    <source>
        <dbReference type="UniProtKB" id="P03349"/>
    </source>
</evidence>
<evidence type="ECO:0000250" key="5">
    <source>
        <dbReference type="UniProtKB" id="P04591"/>
    </source>
</evidence>
<evidence type="ECO:0000250" key="6">
    <source>
        <dbReference type="UniProtKB" id="P12493"/>
    </source>
</evidence>
<evidence type="ECO:0000250" key="7">
    <source>
        <dbReference type="UniProtKB" id="P12497"/>
    </source>
</evidence>
<evidence type="ECO:0000255" key="8">
    <source>
        <dbReference type="PROSITE-ProRule" id="PRU00047"/>
    </source>
</evidence>
<evidence type="ECO:0000256" key="9">
    <source>
        <dbReference type="SAM" id="MobiDB-lite"/>
    </source>
</evidence>
<evidence type="ECO:0000305" key="10"/>
<proteinExistence type="inferred from homology"/>
<dbReference type="EMBL" id="AH003604">
    <property type="protein sequence ID" value="AAB03522.1"/>
    <property type="molecule type" value="Genomic_RNA"/>
</dbReference>
<dbReference type="SMR" id="P12494"/>
<dbReference type="PRO" id="PR:P12494"/>
<dbReference type="GO" id="GO:0042025">
    <property type="term" value="C:host cell nucleus"/>
    <property type="evidence" value="ECO:0007669"/>
    <property type="project" value="UniProtKB-SubCell"/>
</dbReference>
<dbReference type="GO" id="GO:0020002">
    <property type="term" value="C:host cell plasma membrane"/>
    <property type="evidence" value="ECO:0007669"/>
    <property type="project" value="UniProtKB-SubCell"/>
</dbReference>
<dbReference type="GO" id="GO:0072494">
    <property type="term" value="C:host multivesicular body"/>
    <property type="evidence" value="ECO:0007669"/>
    <property type="project" value="UniProtKB-SubCell"/>
</dbReference>
<dbReference type="GO" id="GO:0016020">
    <property type="term" value="C:membrane"/>
    <property type="evidence" value="ECO:0007669"/>
    <property type="project" value="UniProtKB-KW"/>
</dbReference>
<dbReference type="GO" id="GO:0019013">
    <property type="term" value="C:viral nucleocapsid"/>
    <property type="evidence" value="ECO:0007669"/>
    <property type="project" value="UniProtKB-KW"/>
</dbReference>
<dbReference type="GO" id="GO:0055036">
    <property type="term" value="C:virion membrane"/>
    <property type="evidence" value="ECO:0007669"/>
    <property type="project" value="UniProtKB-SubCell"/>
</dbReference>
<dbReference type="GO" id="GO:0003723">
    <property type="term" value="F:RNA binding"/>
    <property type="evidence" value="ECO:0007669"/>
    <property type="project" value="UniProtKB-KW"/>
</dbReference>
<dbReference type="GO" id="GO:0005198">
    <property type="term" value="F:structural molecule activity"/>
    <property type="evidence" value="ECO:0007669"/>
    <property type="project" value="InterPro"/>
</dbReference>
<dbReference type="GO" id="GO:0008270">
    <property type="term" value="F:zinc ion binding"/>
    <property type="evidence" value="ECO:0007669"/>
    <property type="project" value="UniProtKB-KW"/>
</dbReference>
<dbReference type="GO" id="GO:0039702">
    <property type="term" value="P:viral budding via host ESCRT complex"/>
    <property type="evidence" value="ECO:0007669"/>
    <property type="project" value="UniProtKB-KW"/>
</dbReference>
<dbReference type="GO" id="GO:0075523">
    <property type="term" value="P:viral translational frameshifting"/>
    <property type="evidence" value="ECO:0007669"/>
    <property type="project" value="UniProtKB-KW"/>
</dbReference>
<dbReference type="FunFam" id="1.10.1200.30:FF:000001">
    <property type="entry name" value="Gag polyprotein"/>
    <property type="match status" value="1"/>
</dbReference>
<dbReference type="FunFam" id="1.10.150.90:FF:000001">
    <property type="entry name" value="Gag polyprotein"/>
    <property type="match status" value="1"/>
</dbReference>
<dbReference type="FunFam" id="1.10.375.10:FF:000001">
    <property type="entry name" value="Gag polyprotein"/>
    <property type="match status" value="1"/>
</dbReference>
<dbReference type="FunFam" id="1.20.5.760:FF:000001">
    <property type="entry name" value="Gag polyprotein"/>
    <property type="match status" value="1"/>
</dbReference>
<dbReference type="FunFam" id="4.10.60.10:FF:000001">
    <property type="entry name" value="Gag polyprotein"/>
    <property type="match status" value="1"/>
</dbReference>
<dbReference type="Gene3D" id="1.10.1200.30">
    <property type="match status" value="1"/>
</dbReference>
<dbReference type="Gene3D" id="6.10.250.390">
    <property type="match status" value="1"/>
</dbReference>
<dbReference type="Gene3D" id="1.10.375.10">
    <property type="entry name" value="Human Immunodeficiency Virus Type 1 Capsid Protein"/>
    <property type="match status" value="1"/>
</dbReference>
<dbReference type="Gene3D" id="1.10.150.90">
    <property type="entry name" value="Immunodeficiency lentiviruses, gag gene matrix protein p17"/>
    <property type="match status" value="1"/>
</dbReference>
<dbReference type="Gene3D" id="1.20.5.760">
    <property type="entry name" value="Single helix bin"/>
    <property type="match status" value="1"/>
</dbReference>
<dbReference type="Gene3D" id="4.10.60.10">
    <property type="entry name" value="Zinc finger, CCHC-type"/>
    <property type="match status" value="1"/>
</dbReference>
<dbReference type="InterPro" id="IPR045345">
    <property type="entry name" value="Gag_p24_C"/>
</dbReference>
<dbReference type="InterPro" id="IPR014817">
    <property type="entry name" value="Gag_p6"/>
</dbReference>
<dbReference type="InterPro" id="IPR000071">
    <property type="entry name" value="Lentvrl_matrix_N"/>
</dbReference>
<dbReference type="InterPro" id="IPR012344">
    <property type="entry name" value="Matrix_HIV/RSV_N"/>
</dbReference>
<dbReference type="InterPro" id="IPR050195">
    <property type="entry name" value="Primate_lentivir_Gag_pol-like"/>
</dbReference>
<dbReference type="InterPro" id="IPR008916">
    <property type="entry name" value="Retrov_capsid_C"/>
</dbReference>
<dbReference type="InterPro" id="IPR008919">
    <property type="entry name" value="Retrov_capsid_N"/>
</dbReference>
<dbReference type="InterPro" id="IPR010999">
    <property type="entry name" value="Retrovr_matrix"/>
</dbReference>
<dbReference type="InterPro" id="IPR001878">
    <property type="entry name" value="Znf_CCHC"/>
</dbReference>
<dbReference type="InterPro" id="IPR036875">
    <property type="entry name" value="Znf_CCHC_sf"/>
</dbReference>
<dbReference type="PANTHER" id="PTHR40389:SF4">
    <property type="match status" value="1"/>
</dbReference>
<dbReference type="PANTHER" id="PTHR40389">
    <property type="entry name" value="ENDOGENOUS RETROVIRUS GROUP K MEMBER 24 GAG POLYPROTEIN-RELATED"/>
    <property type="match status" value="1"/>
</dbReference>
<dbReference type="Pfam" id="PF00540">
    <property type="entry name" value="Gag_p17"/>
    <property type="match status" value="1"/>
</dbReference>
<dbReference type="Pfam" id="PF00607">
    <property type="entry name" value="Gag_p24"/>
    <property type="match status" value="1"/>
</dbReference>
<dbReference type="Pfam" id="PF19317">
    <property type="entry name" value="Gag_p24_C"/>
    <property type="match status" value="1"/>
</dbReference>
<dbReference type="Pfam" id="PF08705">
    <property type="entry name" value="Gag_p6"/>
    <property type="match status" value="1"/>
</dbReference>
<dbReference type="Pfam" id="PF00098">
    <property type="entry name" value="zf-CCHC"/>
    <property type="match status" value="2"/>
</dbReference>
<dbReference type="PRINTS" id="PR00234">
    <property type="entry name" value="HIV1MATRIX"/>
</dbReference>
<dbReference type="SMART" id="SM00343">
    <property type="entry name" value="ZnF_C2HC"/>
    <property type="match status" value="2"/>
</dbReference>
<dbReference type="SUPFAM" id="SSF47836">
    <property type="entry name" value="Retroviral matrix proteins"/>
    <property type="match status" value="1"/>
</dbReference>
<dbReference type="SUPFAM" id="SSF47353">
    <property type="entry name" value="Retrovirus capsid dimerization domain-like"/>
    <property type="match status" value="1"/>
</dbReference>
<dbReference type="SUPFAM" id="SSF47943">
    <property type="entry name" value="Retrovirus capsid protein, N-terminal core domain"/>
    <property type="match status" value="1"/>
</dbReference>
<dbReference type="SUPFAM" id="SSF57756">
    <property type="entry name" value="Retrovirus zinc finger-like domains"/>
    <property type="match status" value="1"/>
</dbReference>
<dbReference type="PROSITE" id="PS50158">
    <property type="entry name" value="ZF_CCHC"/>
    <property type="match status" value="2"/>
</dbReference>